<accession>Q0BMC8</accession>
<organism>
    <name type="scientific">Francisella tularensis subsp. holarctica (strain OSU18)</name>
    <dbReference type="NCBI Taxonomy" id="393011"/>
    <lineage>
        <taxon>Bacteria</taxon>
        <taxon>Pseudomonadati</taxon>
        <taxon>Pseudomonadota</taxon>
        <taxon>Gammaproteobacteria</taxon>
        <taxon>Thiotrichales</taxon>
        <taxon>Francisellaceae</taxon>
        <taxon>Francisella</taxon>
    </lineage>
</organism>
<sequence length="204" mass="21782">MNFLNFSILIFAYLLGSINSAIIVCYIFRLPSPRSVGSGNPGTTNVLRIGGKVLAAITLIFDILKGLVPVVIAKVLTGNDFITACTALYAILGHIFPIFFGFKGGKGVATLIGTLFGFSWILGLIFVITWLCVAIITRYSSLSALVATVIASFSVIFTSDLQVAAPFLIIAIIILVKHKGNIQRLISGQESKIGDKAKAKNDSN</sequence>
<proteinExistence type="inferred from homology"/>
<feature type="chain" id="PRO_1000064179" description="Glycerol-3-phosphate acyltransferase">
    <location>
        <begin position="1"/>
        <end position="204"/>
    </location>
</feature>
<feature type="transmembrane region" description="Helical" evidence="1">
    <location>
        <begin position="8"/>
        <end position="28"/>
    </location>
</feature>
<feature type="transmembrane region" description="Helical" evidence="1">
    <location>
        <begin position="53"/>
        <end position="73"/>
    </location>
</feature>
<feature type="transmembrane region" description="Helical" evidence="1">
    <location>
        <begin position="81"/>
        <end position="101"/>
    </location>
</feature>
<feature type="transmembrane region" description="Helical" evidence="1">
    <location>
        <begin position="116"/>
        <end position="136"/>
    </location>
</feature>
<feature type="transmembrane region" description="Helical" evidence="1">
    <location>
        <begin position="155"/>
        <end position="175"/>
    </location>
</feature>
<protein>
    <recommendedName>
        <fullName evidence="1">Glycerol-3-phosphate acyltransferase</fullName>
    </recommendedName>
    <alternativeName>
        <fullName evidence="1">Acyl-PO4 G3P acyltransferase</fullName>
    </alternativeName>
    <alternativeName>
        <fullName evidence="1">Acyl-phosphate--glycerol-3-phosphate acyltransferase</fullName>
    </alternativeName>
    <alternativeName>
        <fullName evidence="1">G3P acyltransferase</fullName>
        <shortName evidence="1">GPAT</shortName>
        <ecNumber evidence="1">2.3.1.275</ecNumber>
    </alternativeName>
    <alternativeName>
        <fullName evidence="1">Lysophosphatidic acid synthase</fullName>
        <shortName evidence="1">LPA synthase</shortName>
    </alternativeName>
</protein>
<comment type="function">
    <text evidence="1">Catalyzes the transfer of an acyl group from acyl-phosphate (acyl-PO(4)) to glycerol-3-phosphate (G3P) to form lysophosphatidic acid (LPA). This enzyme utilizes acyl-phosphate as fatty acyl donor, but not acyl-CoA or acyl-ACP.</text>
</comment>
<comment type="catalytic activity">
    <reaction evidence="1">
        <text>an acyl phosphate + sn-glycerol 3-phosphate = a 1-acyl-sn-glycero-3-phosphate + phosphate</text>
        <dbReference type="Rhea" id="RHEA:34075"/>
        <dbReference type="ChEBI" id="CHEBI:43474"/>
        <dbReference type="ChEBI" id="CHEBI:57597"/>
        <dbReference type="ChEBI" id="CHEBI:57970"/>
        <dbReference type="ChEBI" id="CHEBI:59918"/>
        <dbReference type="EC" id="2.3.1.275"/>
    </reaction>
</comment>
<comment type="pathway">
    <text evidence="1">Lipid metabolism; phospholipid metabolism.</text>
</comment>
<comment type="subunit">
    <text evidence="1">Probably interacts with PlsX.</text>
</comment>
<comment type="subcellular location">
    <subcellularLocation>
        <location evidence="1">Cell inner membrane</location>
        <topology evidence="1">Multi-pass membrane protein</topology>
    </subcellularLocation>
</comment>
<comment type="similarity">
    <text evidence="1">Belongs to the PlsY family.</text>
</comment>
<dbReference type="EC" id="2.3.1.275" evidence="1"/>
<dbReference type="EMBL" id="CP000437">
    <property type="protein sequence ID" value="ABI82756.1"/>
    <property type="molecule type" value="Genomic_DNA"/>
</dbReference>
<dbReference type="RefSeq" id="WP_011648637.1">
    <property type="nucleotide sequence ID" value="NC_017463.1"/>
</dbReference>
<dbReference type="SMR" id="Q0BMC8"/>
<dbReference type="KEGG" id="fth:FTH_0828"/>
<dbReference type="UniPathway" id="UPA00085"/>
<dbReference type="GO" id="GO:0005886">
    <property type="term" value="C:plasma membrane"/>
    <property type="evidence" value="ECO:0007669"/>
    <property type="project" value="UniProtKB-SubCell"/>
</dbReference>
<dbReference type="GO" id="GO:0043772">
    <property type="term" value="F:acyl-phosphate glycerol-3-phosphate acyltransferase activity"/>
    <property type="evidence" value="ECO:0007669"/>
    <property type="project" value="UniProtKB-UniRule"/>
</dbReference>
<dbReference type="GO" id="GO:0008654">
    <property type="term" value="P:phospholipid biosynthetic process"/>
    <property type="evidence" value="ECO:0007669"/>
    <property type="project" value="UniProtKB-UniRule"/>
</dbReference>
<dbReference type="HAMAP" id="MF_01043">
    <property type="entry name" value="PlsY"/>
    <property type="match status" value="1"/>
</dbReference>
<dbReference type="InterPro" id="IPR003811">
    <property type="entry name" value="G3P_acylTferase_PlsY"/>
</dbReference>
<dbReference type="NCBIfam" id="TIGR00023">
    <property type="entry name" value="glycerol-3-phosphate 1-O-acyltransferase PlsY"/>
    <property type="match status" value="1"/>
</dbReference>
<dbReference type="PANTHER" id="PTHR30309:SF0">
    <property type="entry name" value="GLYCEROL-3-PHOSPHATE ACYLTRANSFERASE-RELATED"/>
    <property type="match status" value="1"/>
</dbReference>
<dbReference type="PANTHER" id="PTHR30309">
    <property type="entry name" value="INNER MEMBRANE PROTEIN YGIH"/>
    <property type="match status" value="1"/>
</dbReference>
<dbReference type="Pfam" id="PF02660">
    <property type="entry name" value="G3P_acyltransf"/>
    <property type="match status" value="1"/>
</dbReference>
<dbReference type="SMART" id="SM01207">
    <property type="entry name" value="G3P_acyltransf"/>
    <property type="match status" value="1"/>
</dbReference>
<name>PLSY_FRATO</name>
<reference key="1">
    <citation type="journal article" date="2006" name="J. Bacteriol.">
        <title>Chromosome rearrangement and diversification of Francisella tularensis revealed by the type B (OSU18) genome sequence.</title>
        <authorList>
            <person name="Petrosino J.F."/>
            <person name="Xiang Q."/>
            <person name="Karpathy S.E."/>
            <person name="Jiang H."/>
            <person name="Yerrapragada S."/>
            <person name="Liu Y."/>
            <person name="Gioia J."/>
            <person name="Hemphill L."/>
            <person name="Gonzalez A."/>
            <person name="Raghavan T.M."/>
            <person name="Uzman A."/>
            <person name="Fox G.E."/>
            <person name="Highlander S."/>
            <person name="Reichard M."/>
            <person name="Morton R.J."/>
            <person name="Clinkenbeard K.D."/>
            <person name="Weinstock G.M."/>
        </authorList>
    </citation>
    <scope>NUCLEOTIDE SEQUENCE [LARGE SCALE GENOMIC DNA]</scope>
    <source>
        <strain>OSU18</strain>
    </source>
</reference>
<evidence type="ECO:0000255" key="1">
    <source>
        <dbReference type="HAMAP-Rule" id="MF_01043"/>
    </source>
</evidence>
<keyword id="KW-0997">Cell inner membrane</keyword>
<keyword id="KW-1003">Cell membrane</keyword>
<keyword id="KW-0444">Lipid biosynthesis</keyword>
<keyword id="KW-0443">Lipid metabolism</keyword>
<keyword id="KW-0472">Membrane</keyword>
<keyword id="KW-0594">Phospholipid biosynthesis</keyword>
<keyword id="KW-1208">Phospholipid metabolism</keyword>
<keyword id="KW-0808">Transferase</keyword>
<keyword id="KW-0812">Transmembrane</keyword>
<keyword id="KW-1133">Transmembrane helix</keyword>
<gene>
    <name evidence="1" type="primary">plsY</name>
    <name type="ordered locus">FTH_0828</name>
</gene>